<dbReference type="EMBL" id="Z69381">
    <property type="protein sequence ID" value="CAA93365.1"/>
    <property type="molecule type" value="Genomic_DNA"/>
</dbReference>
<dbReference type="EMBL" id="Z71509">
    <property type="protein sequence ID" value="CAA96138.1"/>
    <property type="molecule type" value="Genomic_DNA"/>
</dbReference>
<dbReference type="EMBL" id="BK006947">
    <property type="protein sequence ID" value="DAA10325.1"/>
    <property type="molecule type" value="Genomic_DNA"/>
</dbReference>
<dbReference type="PIR" id="S63199">
    <property type="entry name" value="S63199"/>
</dbReference>
<dbReference type="RefSeq" id="NP_014166.1">
    <property type="nucleotide sequence ID" value="NM_001183071.1"/>
</dbReference>
<dbReference type="SMR" id="P53858"/>
<dbReference type="BioGRID" id="35605">
    <property type="interactions" value="163"/>
</dbReference>
<dbReference type="ComplexPortal" id="CPX-1230">
    <property type="entry name" value="BNI4-GLC7 phosphatase complex"/>
</dbReference>
<dbReference type="DIP" id="DIP-1338N"/>
<dbReference type="FunCoup" id="P53858">
    <property type="interactions" value="115"/>
</dbReference>
<dbReference type="IntAct" id="P53858">
    <property type="interactions" value="12"/>
</dbReference>
<dbReference type="MINT" id="P53858"/>
<dbReference type="STRING" id="4932.YNL233W"/>
<dbReference type="iPTMnet" id="P53858"/>
<dbReference type="PaxDb" id="4932-YNL233W"/>
<dbReference type="PeptideAtlas" id="P53858"/>
<dbReference type="EnsemblFungi" id="YNL233W_mRNA">
    <property type="protein sequence ID" value="YNL233W"/>
    <property type="gene ID" value="YNL233W"/>
</dbReference>
<dbReference type="GeneID" id="855488"/>
<dbReference type="KEGG" id="sce:YNL233W"/>
<dbReference type="AGR" id="SGD:S000005177"/>
<dbReference type="SGD" id="S000005177">
    <property type="gene designation" value="BNI4"/>
</dbReference>
<dbReference type="VEuPathDB" id="FungiDB:YNL233W"/>
<dbReference type="eggNOG" id="KOG4339">
    <property type="taxonomic scope" value="Eukaryota"/>
</dbReference>
<dbReference type="GeneTree" id="ENSGT00940000168134"/>
<dbReference type="HOGENOM" id="CLU_312616_0_0_1"/>
<dbReference type="InParanoid" id="P53858"/>
<dbReference type="OMA" id="NYHEDIT"/>
<dbReference type="OrthoDB" id="5563016at2759"/>
<dbReference type="BioCyc" id="YEAST:G3O-33233-MONOMER"/>
<dbReference type="Reactome" id="R-SCE-114608">
    <property type="pathway name" value="Platelet degranulation"/>
</dbReference>
<dbReference type="BioGRID-ORCS" id="855488">
    <property type="hits" value="0 hits in 10 CRISPR screens"/>
</dbReference>
<dbReference type="PRO" id="PR:P53858"/>
<dbReference type="Proteomes" id="UP000002311">
    <property type="component" value="Chromosome XIV"/>
</dbReference>
<dbReference type="RNAct" id="P53858">
    <property type="molecule type" value="protein"/>
</dbReference>
<dbReference type="GO" id="GO:0005935">
    <property type="term" value="C:cellular bud neck"/>
    <property type="evidence" value="ECO:0000314"/>
    <property type="project" value="SGD"/>
</dbReference>
<dbReference type="GO" id="GO:0032174">
    <property type="term" value="C:cellular bud neck septin collar"/>
    <property type="evidence" value="ECO:0000314"/>
    <property type="project" value="ComplexPortal"/>
</dbReference>
<dbReference type="GO" id="GO:0000131">
    <property type="term" value="C:incipient cellular bud site"/>
    <property type="evidence" value="ECO:0000314"/>
    <property type="project" value="SGD"/>
</dbReference>
<dbReference type="GO" id="GO:0000164">
    <property type="term" value="C:protein phosphatase type 1 complex"/>
    <property type="evidence" value="ECO:0000353"/>
    <property type="project" value="ComplexPortal"/>
</dbReference>
<dbReference type="GO" id="GO:0005940">
    <property type="term" value="C:septin ring"/>
    <property type="evidence" value="ECO:0000314"/>
    <property type="project" value="SGD"/>
</dbReference>
<dbReference type="GO" id="GO:0003779">
    <property type="term" value="F:actin binding"/>
    <property type="evidence" value="ECO:0000318"/>
    <property type="project" value="GO_Central"/>
</dbReference>
<dbReference type="GO" id="GO:0030036">
    <property type="term" value="P:actin cytoskeleton organization"/>
    <property type="evidence" value="ECO:0000318"/>
    <property type="project" value="GO_Central"/>
</dbReference>
<dbReference type="GO" id="GO:0006031">
    <property type="term" value="P:chitin biosynthetic process"/>
    <property type="evidence" value="ECO:0000314"/>
    <property type="project" value="ComplexPortal"/>
</dbReference>
<dbReference type="GO" id="GO:0000917">
    <property type="term" value="P:division septum assembly"/>
    <property type="evidence" value="ECO:0000315"/>
    <property type="project" value="SGD"/>
</dbReference>
<dbReference type="PANTHER" id="PTHR12751:SF18">
    <property type="entry name" value="PHOSPHATASE AND ACTIN REGULATOR 1"/>
    <property type="match status" value="1"/>
</dbReference>
<dbReference type="PANTHER" id="PTHR12751">
    <property type="entry name" value="PHOSPHATASE AND ACTIN REGULATOR PHACTR"/>
    <property type="match status" value="1"/>
</dbReference>
<reference key="1">
    <citation type="journal article" date="1996" name="Yeast">
        <title>The DNA sequence of cosmid 14-5 from chromosome XIV reveals 21 open reading frames including a novel gene encoding a globin-like domain.</title>
        <authorList>
            <person name="Pandolfo D."/>
            <person name="de Antoni A."/>
            <person name="Lanfranchi G."/>
            <person name="Valle G."/>
        </authorList>
    </citation>
    <scope>NUCLEOTIDE SEQUENCE [GENOMIC DNA]</scope>
</reference>
<reference key="2">
    <citation type="journal article" date="1997" name="Nature">
        <title>The nucleotide sequence of Saccharomyces cerevisiae chromosome XIV and its evolutionary implications.</title>
        <authorList>
            <person name="Philippsen P."/>
            <person name="Kleine K."/>
            <person name="Poehlmann R."/>
            <person name="Duesterhoeft A."/>
            <person name="Hamberg K."/>
            <person name="Hegemann J.H."/>
            <person name="Obermaier B."/>
            <person name="Urrestarazu L.A."/>
            <person name="Aert R."/>
            <person name="Albermann K."/>
            <person name="Altmann R."/>
            <person name="Andre B."/>
            <person name="Baladron V."/>
            <person name="Ballesta J.P.G."/>
            <person name="Becam A.-M."/>
            <person name="Beinhauer J.D."/>
            <person name="Boskovic J."/>
            <person name="Buitrago M.J."/>
            <person name="Bussereau F."/>
            <person name="Coster F."/>
            <person name="Crouzet M."/>
            <person name="D'Angelo M."/>
            <person name="Dal Pero F."/>
            <person name="De Antoni A."/>
            <person name="del Rey F."/>
            <person name="Doignon F."/>
            <person name="Domdey H."/>
            <person name="Dubois E."/>
            <person name="Fiedler T.A."/>
            <person name="Fleig U."/>
            <person name="Floeth M."/>
            <person name="Fritz C."/>
            <person name="Gaillardin C."/>
            <person name="Garcia-Cantalejo J.M."/>
            <person name="Glansdorff N."/>
            <person name="Goffeau A."/>
            <person name="Gueldener U."/>
            <person name="Herbert C.J."/>
            <person name="Heumann K."/>
            <person name="Heuss-Neitzel D."/>
            <person name="Hilbert H."/>
            <person name="Hinni K."/>
            <person name="Iraqui Houssaini I."/>
            <person name="Jacquet M."/>
            <person name="Jimenez A."/>
            <person name="Jonniaux J.-L."/>
            <person name="Karpfinger-Hartl L."/>
            <person name="Lanfranchi G."/>
            <person name="Lepingle A."/>
            <person name="Levesque H."/>
            <person name="Lyck R."/>
            <person name="Maftahi M."/>
            <person name="Mallet L."/>
            <person name="Maurer C.T.C."/>
            <person name="Messenguy F."/>
            <person name="Mewes H.-W."/>
            <person name="Moestl D."/>
            <person name="Nasr F."/>
            <person name="Nicaud J.-M."/>
            <person name="Niedenthal R.K."/>
            <person name="Pandolfo D."/>
            <person name="Pierard A."/>
            <person name="Piravandi E."/>
            <person name="Planta R.J."/>
            <person name="Pohl T.M."/>
            <person name="Purnelle B."/>
            <person name="Rebischung C."/>
            <person name="Remacha M.A."/>
            <person name="Revuelta J.L."/>
            <person name="Rinke M."/>
            <person name="Saiz J.E."/>
            <person name="Sartorello F."/>
            <person name="Scherens B."/>
            <person name="Sen-Gupta M."/>
            <person name="Soler-Mira A."/>
            <person name="Urbanus J.H.M."/>
            <person name="Valle G."/>
            <person name="Van Dyck L."/>
            <person name="Verhasselt P."/>
            <person name="Vierendeels F."/>
            <person name="Vissers S."/>
            <person name="Voet M."/>
            <person name="Volckaert G."/>
            <person name="Wach A."/>
            <person name="Wambutt R."/>
            <person name="Wedler H."/>
            <person name="Zollner A."/>
            <person name="Hani J."/>
        </authorList>
    </citation>
    <scope>NUCLEOTIDE SEQUENCE [LARGE SCALE GENOMIC DNA]</scope>
    <source>
        <strain>ATCC 204508 / S288c</strain>
    </source>
</reference>
<reference key="3">
    <citation type="journal article" date="2014" name="G3 (Bethesda)">
        <title>The reference genome sequence of Saccharomyces cerevisiae: Then and now.</title>
        <authorList>
            <person name="Engel S.R."/>
            <person name="Dietrich F.S."/>
            <person name="Fisk D.G."/>
            <person name="Binkley G."/>
            <person name="Balakrishnan R."/>
            <person name="Costanzo M.C."/>
            <person name="Dwight S.S."/>
            <person name="Hitz B.C."/>
            <person name="Karra K."/>
            <person name="Nash R.S."/>
            <person name="Weng S."/>
            <person name="Wong E.D."/>
            <person name="Lloyd P."/>
            <person name="Skrzypek M.S."/>
            <person name="Miyasato S.R."/>
            <person name="Simison M."/>
            <person name="Cherry J.M."/>
        </authorList>
    </citation>
    <scope>GENOME REANNOTATION</scope>
    <source>
        <strain>ATCC 204508 / S288c</strain>
    </source>
</reference>
<reference key="4">
    <citation type="journal article" date="1997" name="J. Cell Biol.">
        <title>A septin-based hierarchy of proteins required for localized deposition of chitin in the Saccharomyces cerevisiae cell wall.</title>
        <authorList>
            <person name="DeMarini D.J."/>
            <person name="Adams A.E."/>
            <person name="Fares H."/>
            <person name="De Virgilio C."/>
            <person name="Valle G."/>
            <person name="Chuang J.S."/>
            <person name="Pringle J.R."/>
        </authorList>
    </citation>
    <scope>IDENTIFICATION</scope>
    <scope>SUBUNIT</scope>
</reference>
<reference key="5">
    <citation type="journal article" date="2007" name="J. Proteome Res.">
        <title>Large-scale phosphorylation analysis of alpha-factor-arrested Saccharomyces cerevisiae.</title>
        <authorList>
            <person name="Li X."/>
            <person name="Gerber S.A."/>
            <person name="Rudner A.D."/>
            <person name="Beausoleil S.A."/>
            <person name="Haas W."/>
            <person name="Villen J."/>
            <person name="Elias J.E."/>
            <person name="Gygi S.P."/>
        </authorList>
    </citation>
    <scope>PHOSPHORYLATION [LARGE SCALE ANALYSIS] AT SER-618</scope>
    <scope>IDENTIFICATION BY MASS SPECTROMETRY [LARGE SCALE ANALYSIS]</scope>
    <source>
        <strain>ADR376</strain>
    </source>
</reference>
<reference key="6">
    <citation type="journal article" date="2007" name="Proc. Natl. Acad. Sci. U.S.A.">
        <title>Analysis of phosphorylation sites on proteins from Saccharomyces cerevisiae by electron transfer dissociation (ETD) mass spectrometry.</title>
        <authorList>
            <person name="Chi A."/>
            <person name="Huttenhower C."/>
            <person name="Geer L.Y."/>
            <person name="Coon J.J."/>
            <person name="Syka J.E.P."/>
            <person name="Bai D.L."/>
            <person name="Shabanowitz J."/>
            <person name="Burke D.J."/>
            <person name="Troyanskaya O.G."/>
            <person name="Hunt D.F."/>
        </authorList>
    </citation>
    <scope>PHOSPHORYLATION [LARGE SCALE ANALYSIS] AT SER-364</scope>
    <scope>IDENTIFICATION BY MASS SPECTROMETRY [LARGE SCALE ANALYSIS]</scope>
</reference>
<reference key="7">
    <citation type="journal article" date="2008" name="Mol. Cell. Proteomics">
        <title>A multidimensional chromatography technology for in-depth phosphoproteome analysis.</title>
        <authorList>
            <person name="Albuquerque C.P."/>
            <person name="Smolka M.B."/>
            <person name="Payne S.H."/>
            <person name="Bafna V."/>
            <person name="Eng J."/>
            <person name="Zhou H."/>
        </authorList>
    </citation>
    <scope>PHOSPHORYLATION [LARGE SCALE ANALYSIS] AT SER-476; SER-503; SER-618; THR-703; SER-746 AND SER-825</scope>
    <scope>IDENTIFICATION BY MASS SPECTROMETRY [LARGE SCALE ANALYSIS]</scope>
</reference>
<reference key="8">
    <citation type="journal article" date="2009" name="Science">
        <title>Global analysis of Cdk1 substrate phosphorylation sites provides insights into evolution.</title>
        <authorList>
            <person name="Holt L.J."/>
            <person name="Tuch B.B."/>
            <person name="Villen J."/>
            <person name="Johnson A.D."/>
            <person name="Gygi S.P."/>
            <person name="Morgan D.O."/>
        </authorList>
    </citation>
    <scope>PHOSPHORYLATION [LARGE SCALE ANALYSIS] AT SER-43; SER-133; SER-281; SER-394; THR-410; SER-476; SER-500; SER-503 AND SER-618</scope>
    <scope>IDENTIFICATION BY MASS SPECTROMETRY [LARGE SCALE ANALYSIS]</scope>
</reference>
<reference key="9">
    <citation type="journal article" date="2017" name="Int. J. Mol. Sci.">
        <title>In Vitro and In Vivo Studies on the Structural Organization of Chs3 from Saccharomyces cerevisiae.</title>
        <authorList>
            <person name="Gohlke S."/>
            <person name="Muthukrishnan S."/>
            <person name="Merzendorfer H."/>
        </authorList>
    </citation>
    <scope>DISRUPTION PHENOTYPE</scope>
</reference>
<sequence>MSDSISDSKSSELLNSTFYSSTSINTLDHARTFRNSLILKEISDQSLNSSIKPCESVLDRDVESSVLQRSFGESNARDSEVQTVNMTTSPSLSALADILNERSKYADQKTRKAQNIESSIIEEEEEAEEQNNSINYHEDITGSRLSVREEANENLAMTSPNLIDIDGSNSIQVAPLSLPSFEEPDFLSTPRVKPDSQGPRSKVSTRRTILERDNNLPVKREENTIINSETESTTHSAPFLKEDPKPSPPSSKLYNPKVRLNKAEARKYTDSSAQRTTSAGSVLEDTSMHKKKKSIFSFLKKKEPKPVIGNNSVTNEKNKMSSSSTFSMNIQTSLKTPEKLKKKSHSSSSIFNSFLKGKIETSDSPRKEPMRQKKRTPKSKDKKQDTEQIIDAASVLSTESPLLRKNHDDTPVKIDHVTRSIDQRKPTPLNMDLILGGDKQINTPLQEHVREDDDAKNDLQLPTKDNFLSLDYEAPSPAFSKHDTGEVLFPKFLDNHEVDSIVSLERTRSTKSNKRSSMNSQRRSLTDTLSIKAQSEGMFITEASSVVLSTPDLTKSPASSILKNGRFEYSDNFSREHSYEGTTNEDFLDIKDDSGPLKKDDIFLESIEQKFDQLVMASDEEKTEVERDVPKPREEPLKKDSERQSVFADDDNELISDIMEFASFINFGDDDLNLDLDLGDTTASYATETPEPVGNDEVNRSGTFDTRNNKEDSYKERETQSYSAAGATTYGDERQGQLHTFEQDGSEINDNEFENEDFNKHIEQPIEVTPRNNAYLPEFEPNRPVSMSFKGLKAPRMNTSFIDSMTPDSPVKSDLTSLGEVYVNSNNDQGVRFSSQIILYDTYGEFEYDRHPEISTCNQLTPQLAQMIKLELNELKSAMEVHDDSRCYTHFY</sequence>
<accession>P53858</accession>
<accession>D6W0V9</accession>
<feature type="chain" id="PRO_0000064959" description="Protein BNI4">
    <location>
        <begin position="1"/>
        <end position="892"/>
    </location>
</feature>
<feature type="region of interest" description="Disordered" evidence="1">
    <location>
        <begin position="185"/>
        <end position="287"/>
    </location>
</feature>
<feature type="region of interest" description="Disordered" evidence="1">
    <location>
        <begin position="305"/>
        <end position="387"/>
    </location>
</feature>
<feature type="region of interest" description="Disordered" evidence="1">
    <location>
        <begin position="506"/>
        <end position="526"/>
    </location>
</feature>
<feature type="region of interest" description="Disordered" evidence="1">
    <location>
        <begin position="618"/>
        <end position="644"/>
    </location>
</feature>
<feature type="region of interest" description="Disordered" evidence="1">
    <location>
        <begin position="685"/>
        <end position="734"/>
    </location>
</feature>
<feature type="compositionally biased region" description="Basic and acidic residues" evidence="1">
    <location>
        <begin position="208"/>
        <end position="223"/>
    </location>
</feature>
<feature type="compositionally biased region" description="Polar residues" evidence="1">
    <location>
        <begin position="224"/>
        <end position="236"/>
    </location>
</feature>
<feature type="compositionally biased region" description="Polar residues" evidence="1">
    <location>
        <begin position="270"/>
        <end position="280"/>
    </location>
</feature>
<feature type="compositionally biased region" description="Polar residues" evidence="1">
    <location>
        <begin position="309"/>
        <end position="335"/>
    </location>
</feature>
<feature type="compositionally biased region" description="Low complexity" evidence="1">
    <location>
        <begin position="346"/>
        <end position="356"/>
    </location>
</feature>
<feature type="compositionally biased region" description="Basic and acidic residues" evidence="1">
    <location>
        <begin position="357"/>
        <end position="371"/>
    </location>
</feature>
<feature type="compositionally biased region" description="Basic and acidic residues" evidence="1">
    <location>
        <begin position="624"/>
        <end position="643"/>
    </location>
</feature>
<feature type="compositionally biased region" description="Basic and acidic residues" evidence="1">
    <location>
        <begin position="707"/>
        <end position="719"/>
    </location>
</feature>
<feature type="modified residue" description="Phosphoserine" evidence="7">
    <location>
        <position position="43"/>
    </location>
</feature>
<feature type="modified residue" description="Phosphoserine" evidence="7">
    <location>
        <position position="133"/>
    </location>
</feature>
<feature type="modified residue" description="Phosphoserine" evidence="7">
    <location>
        <position position="281"/>
    </location>
</feature>
<feature type="modified residue" description="Phosphoserine" evidence="4">
    <location>
        <position position="364"/>
    </location>
</feature>
<feature type="modified residue" description="Phosphoserine" evidence="7">
    <location>
        <position position="394"/>
    </location>
</feature>
<feature type="modified residue" description="Phosphothreonine" evidence="7">
    <location>
        <position position="410"/>
    </location>
</feature>
<feature type="modified residue" description="Phosphoserine" evidence="6 7">
    <location>
        <position position="476"/>
    </location>
</feature>
<feature type="modified residue" description="Phosphoserine" evidence="7">
    <location>
        <position position="500"/>
    </location>
</feature>
<feature type="modified residue" description="Phosphoserine" evidence="6 7">
    <location>
        <position position="503"/>
    </location>
</feature>
<feature type="modified residue" description="Phosphoserine" evidence="5 6 7">
    <location>
        <position position="618"/>
    </location>
</feature>
<feature type="modified residue" description="Phosphothreonine" evidence="6">
    <location>
        <position position="703"/>
    </location>
</feature>
<feature type="modified residue" description="Phosphoserine" evidence="6">
    <location>
        <position position="746"/>
    </location>
</feature>
<feature type="modified residue" description="Phosphoserine" evidence="6">
    <location>
        <position position="825"/>
    </location>
</feature>
<protein>
    <recommendedName>
        <fullName>Protein BNI4</fullName>
    </recommendedName>
</protein>
<proteinExistence type="evidence at protein level"/>
<gene>
    <name type="primary">BNI4</name>
    <name type="ordered locus">YNL233W</name>
    <name type="ORF">N1146</name>
</gene>
<evidence type="ECO:0000256" key="1">
    <source>
        <dbReference type="SAM" id="MobiDB-lite"/>
    </source>
</evidence>
<evidence type="ECO:0000269" key="2">
    <source>
    </source>
</evidence>
<evidence type="ECO:0000269" key="3">
    <source>
    </source>
</evidence>
<evidence type="ECO:0007744" key="4">
    <source>
    </source>
</evidence>
<evidence type="ECO:0007744" key="5">
    <source>
    </source>
</evidence>
<evidence type="ECO:0007744" key="6">
    <source>
    </source>
</evidence>
<evidence type="ECO:0007744" key="7">
    <source>
    </source>
</evidence>
<name>BNI4_YEAST</name>
<comment type="subunit">
    <text evidence="3">May interact with CHS3 and seems to be an adapter (along with SKT5) to link CHS3 to septins.</text>
</comment>
<comment type="interaction">
    <interactant intactId="EBI-3704">
        <id>P53858</id>
    </interactant>
    <interactant intactId="EBI-13715">
        <id>P32598</id>
        <label>GLC7</label>
    </interactant>
    <organismsDiffer>false</organismsDiffer>
    <experiments>5</experiments>
</comment>
<comment type="interaction">
    <interactant intactId="EBI-3704">
        <id>P53858</id>
    </interactant>
    <interactant intactId="EBI-8659">
        <id>P02829</id>
        <label>HSP82</label>
    </interactant>
    <organismsDiffer>false</organismsDiffer>
    <experiments>2</experiments>
</comment>
<comment type="disruption phenotype">
    <text evidence="2">CHS3 abnormally localized to vacuole.</text>
</comment>
<keyword id="KW-0597">Phosphoprotein</keyword>
<keyword id="KW-1185">Reference proteome</keyword>
<organism>
    <name type="scientific">Saccharomyces cerevisiae (strain ATCC 204508 / S288c)</name>
    <name type="common">Baker's yeast</name>
    <dbReference type="NCBI Taxonomy" id="559292"/>
    <lineage>
        <taxon>Eukaryota</taxon>
        <taxon>Fungi</taxon>
        <taxon>Dikarya</taxon>
        <taxon>Ascomycota</taxon>
        <taxon>Saccharomycotina</taxon>
        <taxon>Saccharomycetes</taxon>
        <taxon>Saccharomycetales</taxon>
        <taxon>Saccharomycetaceae</taxon>
        <taxon>Saccharomyces</taxon>
    </lineage>
</organism>